<protein>
    <recommendedName>
        <fullName>Phosphatidylinositol transfer protein alpha isoform</fullName>
        <shortName>PI-TP-alpha</shortName>
        <shortName>PtdIns transfer protein alpha</shortName>
        <shortName>PtdInsTP alpha</shortName>
    </recommendedName>
    <alternativeName>
        <fullName>Phosphatidylinositol-transfer protein 35 kDa isoform</fullName>
        <shortName>PI-TP 35 kda isoform</shortName>
    </alternativeName>
</protein>
<keyword id="KW-0007">Acetylation</keyword>
<keyword id="KW-0963">Cytoplasm</keyword>
<keyword id="KW-0903">Direct protein sequencing</keyword>
<keyword id="KW-0445">Lipid transport</keyword>
<keyword id="KW-0446">Lipid-binding</keyword>
<keyword id="KW-0539">Nucleus</keyword>
<keyword id="KW-1185">Reference proteome</keyword>
<keyword id="KW-0813">Transport</keyword>
<proteinExistence type="evidence at protein level"/>
<name>PIPNA_BOVIN</name>
<organism>
    <name type="scientific">Bos taurus</name>
    <name type="common">Bovine</name>
    <dbReference type="NCBI Taxonomy" id="9913"/>
    <lineage>
        <taxon>Eukaryota</taxon>
        <taxon>Metazoa</taxon>
        <taxon>Chordata</taxon>
        <taxon>Craniata</taxon>
        <taxon>Vertebrata</taxon>
        <taxon>Euteleostomi</taxon>
        <taxon>Mammalia</taxon>
        <taxon>Eutheria</taxon>
        <taxon>Laurasiatheria</taxon>
        <taxon>Artiodactyla</taxon>
        <taxon>Ruminantia</taxon>
        <taxon>Pecora</taxon>
        <taxon>Bovidae</taxon>
        <taxon>Bovinae</taxon>
        <taxon>Bos</taxon>
    </lineage>
</organism>
<accession>Q2HJ54</accession>
<accession>Q9TR37</accession>
<feature type="initiator methionine" description="Removed" evidence="3">
    <location>
        <position position="1"/>
    </location>
</feature>
<feature type="chain" id="PRO_0000269200" description="Phosphatidylinositol transfer protein alpha isoform">
    <location>
        <begin position="2"/>
        <end position="270"/>
    </location>
</feature>
<feature type="binding site" evidence="2">
    <location>
        <position position="58"/>
    </location>
    <ligand>
        <name>a 1,2-diacyl-sn-glycero-3-phospho-(1D-myo-inositol)</name>
        <dbReference type="ChEBI" id="CHEBI:57880"/>
    </ligand>
</feature>
<feature type="binding site" evidence="2">
    <location>
        <position position="60"/>
    </location>
    <ligand>
        <name>a 1,2-diacyl-sn-glycero-3-phospho-(1D-myo-inositol)</name>
        <dbReference type="ChEBI" id="CHEBI:57880"/>
    </ligand>
</feature>
<feature type="binding site" evidence="2">
    <location>
        <position position="85"/>
    </location>
    <ligand>
        <name>a 1,2-diacyl-sn-glycero-3-phospho-(1D-myo-inositol)</name>
        <dbReference type="ChEBI" id="CHEBI:57880"/>
    </ligand>
</feature>
<feature type="binding site" evidence="2">
    <location>
        <position position="89"/>
    </location>
    <ligand>
        <name>a 1,2-diacyl-sn-glycero-3-phospho-(1D-myo-inositol)</name>
        <dbReference type="ChEBI" id="CHEBI:57880"/>
    </ligand>
</feature>
<feature type="binding site" evidence="2">
    <location>
        <position position="96"/>
    </location>
    <ligand>
        <name>a 1,2-diacyl-sn-glycero-3-phospho-(1D-myo-inositol)</name>
        <dbReference type="ChEBI" id="CHEBI:57880"/>
    </ligand>
</feature>
<feature type="binding site" evidence="2">
    <location>
        <position position="194"/>
    </location>
    <ligand>
        <name>a 1,2-diacyl-sn-glycero-3-phospho-(1D-myo-inositol)</name>
        <dbReference type="ChEBI" id="CHEBI:57880"/>
    </ligand>
</feature>
<feature type="modified residue" description="N6-acetyllysine" evidence="2">
    <location>
        <position position="215"/>
    </location>
</feature>
<evidence type="ECO:0000250" key="1">
    <source>
        <dbReference type="UniProtKB" id="P53810"/>
    </source>
</evidence>
<evidence type="ECO:0000250" key="2">
    <source>
        <dbReference type="UniProtKB" id="Q00169"/>
    </source>
</evidence>
<evidence type="ECO:0000269" key="3">
    <source>
    </source>
</evidence>
<evidence type="ECO:0000305" key="4"/>
<evidence type="ECO:0000305" key="5">
    <source>
    </source>
</evidence>
<gene>
    <name type="primary">PITPNA</name>
</gene>
<dbReference type="EMBL" id="BC113306">
    <property type="protein sequence ID" value="AAI13307.1"/>
    <property type="molecule type" value="mRNA"/>
</dbReference>
<dbReference type="PIR" id="A48214">
    <property type="entry name" value="A48214"/>
</dbReference>
<dbReference type="PIR" id="S58431">
    <property type="entry name" value="S58431"/>
</dbReference>
<dbReference type="RefSeq" id="NP_001040047.1">
    <property type="nucleotide sequence ID" value="NM_001046582.1"/>
</dbReference>
<dbReference type="SMR" id="Q2HJ54"/>
<dbReference type="FunCoup" id="Q2HJ54">
    <property type="interactions" value="3501"/>
</dbReference>
<dbReference type="STRING" id="9913.ENSBTAP00000074228"/>
<dbReference type="SwissLipids" id="SLP:000000988"/>
<dbReference type="PaxDb" id="9913-ENSBTAP00000043732"/>
<dbReference type="Ensembl" id="ENSBTAT00000116103.1">
    <property type="protein sequence ID" value="ENSBTAP00000082114.1"/>
    <property type="gene ID" value="ENSBTAG00000011480.7"/>
</dbReference>
<dbReference type="GeneID" id="616550"/>
<dbReference type="KEGG" id="bta:616550"/>
<dbReference type="CTD" id="5306"/>
<dbReference type="VEuPathDB" id="HostDB:ENSBTAG00000011480"/>
<dbReference type="VGNC" id="VGNC:32919">
    <property type="gene designation" value="PITPNA"/>
</dbReference>
<dbReference type="eggNOG" id="KOG3668">
    <property type="taxonomic scope" value="Eukaryota"/>
</dbReference>
<dbReference type="GeneTree" id="ENSGT00940000157119"/>
<dbReference type="HOGENOM" id="CLU_046509_0_0_1"/>
<dbReference type="InParanoid" id="Q2HJ54"/>
<dbReference type="OMA" id="QHNVHEL"/>
<dbReference type="OrthoDB" id="18453at2759"/>
<dbReference type="TreeFam" id="TF313279"/>
<dbReference type="Proteomes" id="UP000009136">
    <property type="component" value="Chromosome 19"/>
</dbReference>
<dbReference type="Bgee" id="ENSBTAG00000011480">
    <property type="expression patterns" value="Expressed in corpus epididymis and 106 other cell types or tissues"/>
</dbReference>
<dbReference type="GO" id="GO:0005737">
    <property type="term" value="C:cytoplasm"/>
    <property type="evidence" value="ECO:0000250"/>
    <property type="project" value="UniProtKB"/>
</dbReference>
<dbReference type="GO" id="GO:0005634">
    <property type="term" value="C:nucleus"/>
    <property type="evidence" value="ECO:0000250"/>
    <property type="project" value="UniProtKB"/>
</dbReference>
<dbReference type="GO" id="GO:0031210">
    <property type="term" value="F:phosphatidylcholine binding"/>
    <property type="evidence" value="ECO:0000318"/>
    <property type="project" value="GO_Central"/>
</dbReference>
<dbReference type="GO" id="GO:0120019">
    <property type="term" value="F:phosphatidylcholine transfer activity"/>
    <property type="evidence" value="ECO:0000314"/>
    <property type="project" value="UniProtKB"/>
</dbReference>
<dbReference type="GO" id="GO:0008525">
    <property type="term" value="F:phosphatidylcholine transporter activity"/>
    <property type="evidence" value="ECO:0000318"/>
    <property type="project" value="GO_Central"/>
</dbReference>
<dbReference type="GO" id="GO:0035091">
    <property type="term" value="F:phosphatidylinositol binding"/>
    <property type="evidence" value="ECO:0000318"/>
    <property type="project" value="GO_Central"/>
</dbReference>
<dbReference type="GO" id="GO:0008526">
    <property type="term" value="F:phosphatidylinositol transfer activity"/>
    <property type="evidence" value="ECO:0000314"/>
    <property type="project" value="UniProtKB"/>
</dbReference>
<dbReference type="CDD" id="cd08888">
    <property type="entry name" value="SRPBCC_PITPNA-B_like"/>
    <property type="match status" value="1"/>
</dbReference>
<dbReference type="FunFam" id="3.30.530.20:FF:000004">
    <property type="entry name" value="Phosphatidylinositol transfer protein alpha isoform"/>
    <property type="match status" value="1"/>
</dbReference>
<dbReference type="Gene3D" id="3.30.530.20">
    <property type="match status" value="1"/>
</dbReference>
<dbReference type="InterPro" id="IPR001666">
    <property type="entry name" value="PI_transfer"/>
</dbReference>
<dbReference type="InterPro" id="IPR055261">
    <property type="entry name" value="PI_transfer_N"/>
</dbReference>
<dbReference type="InterPro" id="IPR023393">
    <property type="entry name" value="START-like_dom_sf"/>
</dbReference>
<dbReference type="PANTHER" id="PTHR10658">
    <property type="entry name" value="PHOSPHATIDYLINOSITOL TRANSFER PROTEIN"/>
    <property type="match status" value="1"/>
</dbReference>
<dbReference type="PANTHER" id="PTHR10658:SF28">
    <property type="entry name" value="PHOSPHATIDYLINOSITOL TRANSFER PROTEIN ALPHA ISOFORM"/>
    <property type="match status" value="1"/>
</dbReference>
<dbReference type="Pfam" id="PF02121">
    <property type="entry name" value="IP_trans"/>
    <property type="match status" value="1"/>
</dbReference>
<dbReference type="PRINTS" id="PR00391">
    <property type="entry name" value="PITRANSFER"/>
</dbReference>
<dbReference type="SUPFAM" id="SSF55961">
    <property type="entry name" value="Bet v1-like"/>
    <property type="match status" value="1"/>
</dbReference>
<sequence length="270" mass="31849">MVLLKEYRVILPVSVEEYQVGQLYSVAEASKNETGGGEGVEVLVNEPYEKDGEKGQYTHKIYHLQSKVPTFVRMLAPEGALNIHEKAWNAYPYCRTVITNEYMKEDFLIKIETWHKPDLGTLENVHKLEPEAWKHVEVIYIDIADRSQVLSKDYKAEEDPAKYKSIKTGRGPLGPNWKQELVNQKDCPYMCAYKLVTVKFKWWGLQNKVENFIHKQERRLFTNFHRQLFCWLDKWVDLTMDDIRRMEDETKRQLDEMRQKDPVKGMTADD</sequence>
<reference key="1">
    <citation type="submission" date="2006-02" db="EMBL/GenBank/DDBJ databases">
        <authorList>
            <consortium name="NIH - Mammalian Gene Collection (MGC) project"/>
        </authorList>
    </citation>
    <scope>NUCLEOTIDE SEQUENCE [LARGE SCALE MRNA]</scope>
    <source>
        <strain>Hereford</strain>
        <tissue>Uterus</tissue>
    </source>
</reference>
<reference key="2">
    <citation type="journal article" date="1995" name="Biochem. J.">
        <title>An isoform of the phosphatidylinositol-transfer protein transfers sphingomyelin and is associated with the Golgi system.</title>
        <authorList>
            <person name="de Vries K.J."/>
            <person name="Heinrichs A.A."/>
            <person name="Cunningham E."/>
            <person name="Brunink F."/>
            <person name="Westerman J."/>
            <person name="Somerharju P.J."/>
            <person name="Cockcroft S."/>
            <person name="Wirtz K.W."/>
            <person name="Snoek G.T."/>
        </authorList>
    </citation>
    <scope>PROTEIN SEQUENCE OF 2-22</scope>
    <scope>FUNCTION</scope>
    <scope>CATALYTIC ACTIVITY</scope>
    <source>
        <tissue>Brain</tissue>
    </source>
</reference>
<comment type="function">
    <text evidence="2 3">Catalyzes the transfer of phosphatidylinositol (PI) and phosphatidylcholine (PC) between membranes (PubMed:7654206). Shows a preference for PI and PC containing shorter saturated or monosaturated acyl chains at the sn-1 and sn-2 positions (By similarity). Preference order for PC is C16:1 &gt; C16:0 &gt; C18:1 &gt; C18:0 &gt; C20:4 and for PI is C16:1 &gt; C16:0 &gt; C18:1 &gt; C18:0 &gt; C20:4 &gt; C20:3 (By similarity).</text>
</comment>
<comment type="catalytic activity">
    <reaction evidence="3">
        <text>a 1,2-diacyl-sn-glycero-3-phosphocholine(in) = a 1,2-diacyl-sn-glycero-3-phosphocholine(out)</text>
        <dbReference type="Rhea" id="RHEA:38571"/>
        <dbReference type="ChEBI" id="CHEBI:57643"/>
    </reaction>
    <physiologicalReaction direction="left-to-right" evidence="5">
        <dbReference type="Rhea" id="RHEA:38572"/>
    </physiologicalReaction>
</comment>
<comment type="catalytic activity">
    <reaction evidence="3">
        <text>a 1,2-diacyl-sn-glycero-3-phospho-(1D-myo-inositol)(in) = a 1,2-diacyl-sn-glycero-3-phospho-(1D-myo-inositol)(out)</text>
        <dbReference type="Rhea" id="RHEA:38691"/>
        <dbReference type="ChEBI" id="CHEBI:57880"/>
    </reaction>
    <physiologicalReaction direction="left-to-right" evidence="5">
        <dbReference type="Rhea" id="RHEA:38692"/>
    </physiologicalReaction>
</comment>
<comment type="subcellular location">
    <subcellularLocation>
        <location evidence="1">Cytoplasm</location>
    </subcellularLocation>
    <subcellularLocation>
        <location evidence="1">Nucleus</location>
    </subcellularLocation>
</comment>
<comment type="PTM">
    <text evidence="1">Phosphorylated by PKC in a calcium and phosphatidylserine-dependent manner.</text>
</comment>
<comment type="similarity">
    <text evidence="4">Belongs to the PtdIns transfer protein family. PI transfer class I subfamily.</text>
</comment>